<evidence type="ECO:0000255" key="1">
    <source>
        <dbReference type="HAMAP-Rule" id="MF_01420"/>
    </source>
</evidence>
<organism>
    <name type="scientific">Streptococcus agalactiae serotype III (strain NEM316)</name>
    <dbReference type="NCBI Taxonomy" id="211110"/>
    <lineage>
        <taxon>Bacteria</taxon>
        <taxon>Bacillati</taxon>
        <taxon>Bacillota</taxon>
        <taxon>Bacilli</taxon>
        <taxon>Lactobacillales</taxon>
        <taxon>Streptococcaceae</taxon>
        <taxon>Streptococcus</taxon>
    </lineage>
</organism>
<dbReference type="EMBL" id="AL766846">
    <property type="protein sequence ID" value="CAD46222.1"/>
    <property type="molecule type" value="Genomic_DNA"/>
</dbReference>
<dbReference type="RefSeq" id="WP_000011316.1">
    <property type="nucleotide sequence ID" value="NC_004368.1"/>
</dbReference>
<dbReference type="SMR" id="Q8E6I5"/>
<dbReference type="GeneID" id="66885514"/>
<dbReference type="KEGG" id="san:gbs0578"/>
<dbReference type="eggNOG" id="COG1481">
    <property type="taxonomic scope" value="Bacteria"/>
</dbReference>
<dbReference type="HOGENOM" id="CLU_053282_0_0_9"/>
<dbReference type="Proteomes" id="UP000000823">
    <property type="component" value="Chromosome"/>
</dbReference>
<dbReference type="GO" id="GO:0003677">
    <property type="term" value="F:DNA binding"/>
    <property type="evidence" value="ECO:0007669"/>
    <property type="project" value="UniProtKB-UniRule"/>
</dbReference>
<dbReference type="GO" id="GO:0051301">
    <property type="term" value="P:cell division"/>
    <property type="evidence" value="ECO:0007669"/>
    <property type="project" value="UniProtKB-UniRule"/>
</dbReference>
<dbReference type="GO" id="GO:0043937">
    <property type="term" value="P:regulation of sporulation"/>
    <property type="evidence" value="ECO:0007669"/>
    <property type="project" value="InterPro"/>
</dbReference>
<dbReference type="Gene3D" id="3.10.28.10">
    <property type="entry name" value="Homing endonucleases"/>
    <property type="match status" value="1"/>
</dbReference>
<dbReference type="HAMAP" id="MF_01420">
    <property type="entry name" value="HTH_type_WhiA"/>
    <property type="match status" value="1"/>
</dbReference>
<dbReference type="InterPro" id="IPR027434">
    <property type="entry name" value="Homing_endonucl"/>
</dbReference>
<dbReference type="InterPro" id="IPR018478">
    <property type="entry name" value="Sporu_reg_WhiA_N_dom"/>
</dbReference>
<dbReference type="InterPro" id="IPR003802">
    <property type="entry name" value="Sporulation_regulator_WhiA"/>
</dbReference>
<dbReference type="InterPro" id="IPR023054">
    <property type="entry name" value="Sporulation_regulator_WhiA_C"/>
</dbReference>
<dbReference type="InterPro" id="IPR039518">
    <property type="entry name" value="WhiA_LAGLIDADG_dom"/>
</dbReference>
<dbReference type="NCBIfam" id="TIGR00647">
    <property type="entry name" value="DNA_bind_WhiA"/>
    <property type="match status" value="1"/>
</dbReference>
<dbReference type="PANTHER" id="PTHR37307">
    <property type="entry name" value="CELL DIVISION PROTEIN WHIA-RELATED"/>
    <property type="match status" value="1"/>
</dbReference>
<dbReference type="PANTHER" id="PTHR37307:SF1">
    <property type="entry name" value="CELL DIVISION PROTEIN WHIA-RELATED"/>
    <property type="match status" value="1"/>
</dbReference>
<dbReference type="Pfam" id="PF02650">
    <property type="entry name" value="HTH_WhiA"/>
    <property type="match status" value="1"/>
</dbReference>
<dbReference type="Pfam" id="PF14527">
    <property type="entry name" value="LAGLIDADG_WhiA"/>
    <property type="match status" value="1"/>
</dbReference>
<dbReference type="Pfam" id="PF10298">
    <property type="entry name" value="WhiA_N"/>
    <property type="match status" value="1"/>
</dbReference>
<dbReference type="SUPFAM" id="SSF55608">
    <property type="entry name" value="Homing endonucleases"/>
    <property type="match status" value="1"/>
</dbReference>
<feature type="chain" id="PRO_0000376571" description="Probable cell division protein WhiA">
    <location>
        <begin position="1"/>
        <end position="303"/>
    </location>
</feature>
<feature type="DNA-binding region" description="H-T-H motif" evidence="1">
    <location>
        <begin position="272"/>
        <end position="303"/>
    </location>
</feature>
<name>WHIA_STRA3</name>
<comment type="function">
    <text evidence="1">Involved in cell division and chromosome segregation.</text>
</comment>
<comment type="similarity">
    <text evidence="1">Belongs to the WhiA family.</text>
</comment>
<sequence length="303" mass="34381">MSFTVKVKEELLGHKSENKMELSAIIKMSGSLGLANHGLNLSITTENAKIARHIYSMLEEHYHLQPEIKYHQKTNLRKNRVYTVFIEEKVDVILADLKLADAFFGIETGIEHSILDNDENGRAYLRGAFLSTGTVREPDSGKYQLEIFSVYLDHAQDLANLMKKFMLDAKVIEHKHGAVTYLQKAEDIMDFLIVIDAMEARDAFEEIKMIRETRNDINRANNVETANIARTITASMKTINNIIKIMDTIGFDALPSDLRQVAQVRVAHPDYSIQQIADSLETPLSKSGVNHRLRKINKIADEL</sequence>
<reference key="1">
    <citation type="journal article" date="2002" name="Mol. Microbiol.">
        <title>Genome sequence of Streptococcus agalactiae, a pathogen causing invasive neonatal disease.</title>
        <authorList>
            <person name="Glaser P."/>
            <person name="Rusniok C."/>
            <person name="Buchrieser C."/>
            <person name="Chevalier F."/>
            <person name="Frangeul L."/>
            <person name="Msadek T."/>
            <person name="Zouine M."/>
            <person name="Couve E."/>
            <person name="Lalioui L."/>
            <person name="Poyart C."/>
            <person name="Trieu-Cuot P."/>
            <person name="Kunst F."/>
        </authorList>
    </citation>
    <scope>NUCLEOTIDE SEQUENCE [LARGE SCALE GENOMIC DNA]</scope>
    <source>
        <strain>NEM316</strain>
    </source>
</reference>
<protein>
    <recommendedName>
        <fullName evidence="1">Probable cell division protein WhiA</fullName>
    </recommendedName>
</protein>
<keyword id="KW-0131">Cell cycle</keyword>
<keyword id="KW-0132">Cell division</keyword>
<keyword id="KW-0238">DNA-binding</keyword>
<gene>
    <name evidence="1" type="primary">whiA</name>
    <name type="ordered locus">gbs0578</name>
</gene>
<accession>Q8E6I5</accession>
<proteinExistence type="inferred from homology"/>